<dbReference type="EC" id="3.1.-.-" evidence="1"/>
<dbReference type="EMBL" id="CP001139">
    <property type="protein sequence ID" value="ACH66661.1"/>
    <property type="molecule type" value="Genomic_DNA"/>
</dbReference>
<dbReference type="RefSeq" id="WP_012533891.1">
    <property type="nucleotide sequence ID" value="NC_011184.1"/>
</dbReference>
<dbReference type="SMR" id="B5FAT7"/>
<dbReference type="KEGG" id="vfm:VFMJ11_0608"/>
<dbReference type="HOGENOM" id="CLU_004675_1_2_6"/>
<dbReference type="Proteomes" id="UP000001857">
    <property type="component" value="Chromosome I"/>
</dbReference>
<dbReference type="GO" id="GO:0008409">
    <property type="term" value="F:5'-3' exonuclease activity"/>
    <property type="evidence" value="ECO:0007669"/>
    <property type="project" value="InterPro"/>
</dbReference>
<dbReference type="GO" id="GO:0017108">
    <property type="term" value="F:5'-flap endonuclease activity"/>
    <property type="evidence" value="ECO:0007669"/>
    <property type="project" value="UniProtKB-UniRule"/>
</dbReference>
<dbReference type="GO" id="GO:0003677">
    <property type="term" value="F:DNA binding"/>
    <property type="evidence" value="ECO:0007669"/>
    <property type="project" value="UniProtKB-UniRule"/>
</dbReference>
<dbReference type="GO" id="GO:0000287">
    <property type="term" value="F:magnesium ion binding"/>
    <property type="evidence" value="ECO:0007669"/>
    <property type="project" value="UniProtKB-UniRule"/>
</dbReference>
<dbReference type="GO" id="GO:0030955">
    <property type="term" value="F:potassium ion binding"/>
    <property type="evidence" value="ECO:0007669"/>
    <property type="project" value="UniProtKB-UniRule"/>
</dbReference>
<dbReference type="GO" id="GO:0033567">
    <property type="term" value="P:DNA replication, Okazaki fragment processing"/>
    <property type="evidence" value="ECO:0007669"/>
    <property type="project" value="UniProtKB-UniRule"/>
</dbReference>
<dbReference type="CDD" id="cd09898">
    <property type="entry name" value="H3TH_53EXO"/>
    <property type="match status" value="1"/>
</dbReference>
<dbReference type="CDD" id="cd09859">
    <property type="entry name" value="PIN_53EXO"/>
    <property type="match status" value="1"/>
</dbReference>
<dbReference type="FunFam" id="1.10.150.20:FF:000003">
    <property type="entry name" value="DNA polymerase I"/>
    <property type="match status" value="1"/>
</dbReference>
<dbReference type="Gene3D" id="1.10.150.20">
    <property type="entry name" value="5' to 3' exonuclease, C-terminal subdomain"/>
    <property type="match status" value="1"/>
</dbReference>
<dbReference type="Gene3D" id="3.40.50.1010">
    <property type="entry name" value="5'-nuclease"/>
    <property type="match status" value="1"/>
</dbReference>
<dbReference type="HAMAP" id="MF_01192">
    <property type="entry name" value="Xni"/>
    <property type="match status" value="1"/>
</dbReference>
<dbReference type="InterPro" id="IPR020046">
    <property type="entry name" value="5-3_exonucl_a-hlix_arch_N"/>
</dbReference>
<dbReference type="InterPro" id="IPR002421">
    <property type="entry name" value="5-3_exonuclease"/>
</dbReference>
<dbReference type="InterPro" id="IPR036279">
    <property type="entry name" value="5-3_exonuclease_C_sf"/>
</dbReference>
<dbReference type="InterPro" id="IPR020045">
    <property type="entry name" value="DNA_polI_H3TH"/>
</dbReference>
<dbReference type="InterPro" id="IPR038969">
    <property type="entry name" value="FEN"/>
</dbReference>
<dbReference type="InterPro" id="IPR008918">
    <property type="entry name" value="HhH2"/>
</dbReference>
<dbReference type="InterPro" id="IPR029060">
    <property type="entry name" value="PIN-like_dom_sf"/>
</dbReference>
<dbReference type="InterPro" id="IPR022895">
    <property type="entry name" value="Xni"/>
</dbReference>
<dbReference type="NCBIfam" id="NF007017">
    <property type="entry name" value="PRK09482.1"/>
    <property type="match status" value="1"/>
</dbReference>
<dbReference type="PANTHER" id="PTHR42646:SF2">
    <property type="entry name" value="5'-3' EXONUCLEASE FAMILY PROTEIN"/>
    <property type="match status" value="1"/>
</dbReference>
<dbReference type="PANTHER" id="PTHR42646">
    <property type="entry name" value="FLAP ENDONUCLEASE XNI"/>
    <property type="match status" value="1"/>
</dbReference>
<dbReference type="Pfam" id="PF01367">
    <property type="entry name" value="5_3_exonuc"/>
    <property type="match status" value="1"/>
</dbReference>
<dbReference type="Pfam" id="PF02739">
    <property type="entry name" value="5_3_exonuc_N"/>
    <property type="match status" value="1"/>
</dbReference>
<dbReference type="SMART" id="SM00475">
    <property type="entry name" value="53EXOc"/>
    <property type="match status" value="1"/>
</dbReference>
<dbReference type="SMART" id="SM00279">
    <property type="entry name" value="HhH2"/>
    <property type="match status" value="1"/>
</dbReference>
<dbReference type="SUPFAM" id="SSF47807">
    <property type="entry name" value="5' to 3' exonuclease, C-terminal subdomain"/>
    <property type="match status" value="1"/>
</dbReference>
<dbReference type="SUPFAM" id="SSF88723">
    <property type="entry name" value="PIN domain-like"/>
    <property type="match status" value="1"/>
</dbReference>
<gene>
    <name evidence="1" type="primary">xni</name>
    <name evidence="1" type="synonym">ygdG</name>
    <name type="ordered locus">VFMJ11_0608</name>
</gene>
<proteinExistence type="inferred from homology"/>
<protein>
    <recommendedName>
        <fullName evidence="1">Flap endonuclease Xni</fullName>
        <shortName evidence="1">FEN</shortName>
        <ecNumber evidence="1">3.1.-.-</ecNumber>
    </recommendedName>
</protein>
<keyword id="KW-0238">DNA-binding</keyword>
<keyword id="KW-0255">Endonuclease</keyword>
<keyword id="KW-0378">Hydrolase</keyword>
<keyword id="KW-0460">Magnesium</keyword>
<keyword id="KW-0479">Metal-binding</keyword>
<keyword id="KW-0540">Nuclease</keyword>
<keyword id="KW-0630">Potassium</keyword>
<comment type="function">
    <text evidence="1">Has flap endonuclease activity. During DNA replication, flap endonucleases cleave the 5'-overhanging flap structure that is generated by displacement synthesis when DNA polymerase encounters the 5'-end of a downstream Okazaki fragment.</text>
</comment>
<comment type="cofactor">
    <cofactor evidence="1">
        <name>Mg(2+)</name>
        <dbReference type="ChEBI" id="CHEBI:18420"/>
    </cofactor>
    <text evidence="1">Binds 2 Mg(2+) per subunit. Only one magnesium ion has a direct interaction with the protein, the other interactions are indirect.</text>
</comment>
<comment type="cofactor">
    <cofactor evidence="1">
        <name>K(+)</name>
        <dbReference type="ChEBI" id="CHEBI:29103"/>
    </cofactor>
    <text evidence="1">Binds 1 K(+) per subunit. The potassium ion strongly increases the affinity for DNA.</text>
</comment>
<comment type="similarity">
    <text evidence="1">Belongs to the Xni family.</text>
</comment>
<organism>
    <name type="scientific">Aliivibrio fischeri (strain MJ11)</name>
    <name type="common">Vibrio fischeri</name>
    <dbReference type="NCBI Taxonomy" id="388396"/>
    <lineage>
        <taxon>Bacteria</taxon>
        <taxon>Pseudomonadati</taxon>
        <taxon>Pseudomonadota</taxon>
        <taxon>Gammaproteobacteria</taxon>
        <taxon>Vibrionales</taxon>
        <taxon>Vibrionaceae</taxon>
        <taxon>Aliivibrio</taxon>
    </lineage>
</organism>
<reference key="1">
    <citation type="submission" date="2008-08" db="EMBL/GenBank/DDBJ databases">
        <title>Complete sequence of Vibrio fischeri strain MJ11.</title>
        <authorList>
            <person name="Mandel M.J."/>
            <person name="Stabb E.V."/>
            <person name="Ruby E.G."/>
            <person name="Ferriera S."/>
            <person name="Johnson J."/>
            <person name="Kravitz S."/>
            <person name="Beeson K."/>
            <person name="Sutton G."/>
            <person name="Rogers Y.-H."/>
            <person name="Friedman R."/>
            <person name="Frazier M."/>
            <person name="Venter J.C."/>
        </authorList>
    </citation>
    <scope>NUCLEOTIDE SEQUENCE [LARGE SCALE GENOMIC DNA]</scope>
    <source>
        <strain>MJ11</strain>
    </source>
</reference>
<feature type="chain" id="PRO_1000138397" description="Flap endonuclease Xni">
    <location>
        <begin position="1"/>
        <end position="262"/>
    </location>
</feature>
<feature type="domain" description="5'-3' exonuclease" evidence="1">
    <location>
        <begin position="165"/>
        <end position="255"/>
    </location>
</feature>
<feature type="region of interest" description="Interaction with DNA" evidence="1">
    <location>
        <begin position="189"/>
        <end position="194"/>
    </location>
</feature>
<feature type="binding site" evidence="1">
    <location>
        <position position="109"/>
    </location>
    <ligand>
        <name>Mg(2+)</name>
        <dbReference type="ChEBI" id="CHEBI:18420"/>
    </ligand>
</feature>
<feature type="binding site" evidence="1">
    <location>
        <position position="176"/>
    </location>
    <ligand>
        <name>K(+)</name>
        <dbReference type="ChEBI" id="CHEBI:29103"/>
    </ligand>
</feature>
<feature type="binding site" evidence="1">
    <location>
        <position position="177"/>
    </location>
    <ligand>
        <name>K(+)</name>
        <dbReference type="ChEBI" id="CHEBI:29103"/>
    </ligand>
</feature>
<feature type="binding site" evidence="1">
    <location>
        <position position="187"/>
    </location>
    <ligand>
        <name>K(+)</name>
        <dbReference type="ChEBI" id="CHEBI:29103"/>
    </ligand>
</feature>
<feature type="binding site" evidence="1">
    <location>
        <position position="190"/>
    </location>
    <ligand>
        <name>K(+)</name>
        <dbReference type="ChEBI" id="CHEBI:29103"/>
    </ligand>
</feature>
<evidence type="ECO:0000255" key="1">
    <source>
        <dbReference type="HAMAP-Rule" id="MF_01192"/>
    </source>
</evidence>
<name>XNI_ALIFM</name>
<sequence>MAIHLVIIDALNLIRRVHSAQPNQDDIQAVITTTTRTINKILKETEPTHIIAVFDHHLQDRGWRAEILPQYKEDRKPMPEALQKGMDDIQEAWWKLGIDSLLSDGDEADDLVATLANKVAVHNEQVTIISTDKGYCQLLSPTLRIRDYFQHRWLDAPFVEKEFGLKPEQLADYWGLAGISSSKITGIPGVGPKAALEILTQFPTIEAANESEDLPKKYRKKFDEHYETAILCRQVAGLRTDIELGFNLQDIRYEKGTRDYQV</sequence>
<accession>B5FAT7</accession>